<gene>
    <name evidence="1" type="primary">ribH</name>
    <name type="ordered locus">Pnec_0291</name>
</gene>
<reference key="1">
    <citation type="journal article" date="2013" name="Proc. Natl. Acad. Sci. U.S.A.">
        <title>Polynucleobacter necessarius, a model for genome reduction in both free-living and symbiotic bacteria.</title>
        <authorList>
            <person name="Boscaro V."/>
            <person name="Felletti M."/>
            <person name="Vannini C."/>
            <person name="Ackerman M.S."/>
            <person name="Chain P.S."/>
            <person name="Malfatti S."/>
            <person name="Vergez L.M."/>
            <person name="Shin M."/>
            <person name="Doak T.G."/>
            <person name="Lynch M."/>
            <person name="Petroni G."/>
        </authorList>
    </citation>
    <scope>NUCLEOTIDE SEQUENCE [LARGE SCALE GENOMIC DNA]</scope>
    <source>
        <strain>STIR1</strain>
    </source>
</reference>
<protein>
    <recommendedName>
        <fullName evidence="1">6,7-dimethyl-8-ribityllumazine synthase</fullName>
        <shortName evidence="1">DMRL synthase</shortName>
        <shortName evidence="1">LS</shortName>
        <shortName evidence="1">Lumazine synthase</shortName>
        <ecNumber evidence="1">2.5.1.78</ecNumber>
    </recommendedName>
</protein>
<dbReference type="EC" id="2.5.1.78" evidence="1"/>
<dbReference type="EMBL" id="CP001010">
    <property type="protein sequence ID" value="ACB43584.1"/>
    <property type="molecule type" value="Genomic_DNA"/>
</dbReference>
<dbReference type="SMR" id="B1XTA7"/>
<dbReference type="STRING" id="452638.Pnec_0291"/>
<dbReference type="KEGG" id="pne:Pnec_0291"/>
<dbReference type="eggNOG" id="COG0054">
    <property type="taxonomic scope" value="Bacteria"/>
</dbReference>
<dbReference type="HOGENOM" id="CLU_089358_1_2_4"/>
<dbReference type="OrthoDB" id="9809709at2"/>
<dbReference type="UniPathway" id="UPA00275">
    <property type="reaction ID" value="UER00404"/>
</dbReference>
<dbReference type="GO" id="GO:0005829">
    <property type="term" value="C:cytosol"/>
    <property type="evidence" value="ECO:0007669"/>
    <property type="project" value="TreeGrafter"/>
</dbReference>
<dbReference type="GO" id="GO:0009349">
    <property type="term" value="C:riboflavin synthase complex"/>
    <property type="evidence" value="ECO:0007669"/>
    <property type="project" value="InterPro"/>
</dbReference>
<dbReference type="GO" id="GO:0000906">
    <property type="term" value="F:6,7-dimethyl-8-ribityllumazine synthase activity"/>
    <property type="evidence" value="ECO:0007669"/>
    <property type="project" value="UniProtKB-UniRule"/>
</dbReference>
<dbReference type="GO" id="GO:0009231">
    <property type="term" value="P:riboflavin biosynthetic process"/>
    <property type="evidence" value="ECO:0007669"/>
    <property type="project" value="UniProtKB-UniRule"/>
</dbReference>
<dbReference type="CDD" id="cd09209">
    <property type="entry name" value="Lumazine_synthase-I"/>
    <property type="match status" value="1"/>
</dbReference>
<dbReference type="Gene3D" id="3.40.50.960">
    <property type="entry name" value="Lumazine/riboflavin synthase"/>
    <property type="match status" value="1"/>
</dbReference>
<dbReference type="HAMAP" id="MF_00178">
    <property type="entry name" value="Lumazine_synth"/>
    <property type="match status" value="1"/>
</dbReference>
<dbReference type="InterPro" id="IPR034964">
    <property type="entry name" value="LS"/>
</dbReference>
<dbReference type="InterPro" id="IPR002180">
    <property type="entry name" value="LS/RS"/>
</dbReference>
<dbReference type="InterPro" id="IPR036467">
    <property type="entry name" value="LS/RS_sf"/>
</dbReference>
<dbReference type="NCBIfam" id="TIGR00114">
    <property type="entry name" value="lumazine-synth"/>
    <property type="match status" value="1"/>
</dbReference>
<dbReference type="PANTHER" id="PTHR21058:SF0">
    <property type="entry name" value="6,7-DIMETHYL-8-RIBITYLLUMAZINE SYNTHASE"/>
    <property type="match status" value="1"/>
</dbReference>
<dbReference type="PANTHER" id="PTHR21058">
    <property type="entry name" value="6,7-DIMETHYL-8-RIBITYLLUMAZINE SYNTHASE DMRL SYNTHASE LUMAZINE SYNTHASE"/>
    <property type="match status" value="1"/>
</dbReference>
<dbReference type="Pfam" id="PF00885">
    <property type="entry name" value="DMRL_synthase"/>
    <property type="match status" value="1"/>
</dbReference>
<dbReference type="SUPFAM" id="SSF52121">
    <property type="entry name" value="Lumazine synthase"/>
    <property type="match status" value="1"/>
</dbReference>
<feature type="chain" id="PRO_1000098215" description="6,7-dimethyl-8-ribityllumazine synthase">
    <location>
        <begin position="1"/>
        <end position="171"/>
    </location>
</feature>
<feature type="active site" description="Proton donor" evidence="1">
    <location>
        <position position="96"/>
    </location>
</feature>
<feature type="binding site" evidence="1">
    <location>
        <position position="30"/>
    </location>
    <ligand>
        <name>5-amino-6-(D-ribitylamino)uracil</name>
        <dbReference type="ChEBI" id="CHEBI:15934"/>
    </ligand>
</feature>
<feature type="binding site" evidence="1">
    <location>
        <begin position="64"/>
        <end position="66"/>
    </location>
    <ligand>
        <name>5-amino-6-(D-ribitylamino)uracil</name>
        <dbReference type="ChEBI" id="CHEBI:15934"/>
    </ligand>
</feature>
<feature type="binding site" evidence="1">
    <location>
        <begin position="88"/>
        <end position="90"/>
    </location>
    <ligand>
        <name>5-amino-6-(D-ribitylamino)uracil</name>
        <dbReference type="ChEBI" id="CHEBI:15934"/>
    </ligand>
</feature>
<feature type="binding site" evidence="1">
    <location>
        <begin position="93"/>
        <end position="94"/>
    </location>
    <ligand>
        <name>(2S)-2-hydroxy-3-oxobutyl phosphate</name>
        <dbReference type="ChEBI" id="CHEBI:58830"/>
    </ligand>
</feature>
<feature type="binding site" evidence="1">
    <location>
        <position position="121"/>
    </location>
    <ligand>
        <name>5-amino-6-(D-ribitylamino)uracil</name>
        <dbReference type="ChEBI" id="CHEBI:15934"/>
    </ligand>
</feature>
<feature type="binding site" evidence="1">
    <location>
        <position position="135"/>
    </location>
    <ligand>
        <name>(2S)-2-hydroxy-3-oxobutyl phosphate</name>
        <dbReference type="ChEBI" id="CHEBI:58830"/>
    </ligand>
</feature>
<evidence type="ECO:0000255" key="1">
    <source>
        <dbReference type="HAMAP-Rule" id="MF_00178"/>
    </source>
</evidence>
<sequence length="171" mass="18053">MTNSTSDFVGVLEADLNGQDLRIGIVQARFNEDHCVALTSACINELLSLGVTQSDIKLVTVPGALEISFALQKMAETGEFDGLIALGAVIRGETYHFELVSNESAASITRISIDSGLPIANGVLTCDTDEQANARVQVKGAECAQAVVEMANLALALTPDIDIEINASEEE</sequence>
<organism>
    <name type="scientific">Polynucleobacter necessarius subsp. necessarius (strain STIR1)</name>
    <dbReference type="NCBI Taxonomy" id="452638"/>
    <lineage>
        <taxon>Bacteria</taxon>
        <taxon>Pseudomonadati</taxon>
        <taxon>Pseudomonadota</taxon>
        <taxon>Betaproteobacteria</taxon>
        <taxon>Burkholderiales</taxon>
        <taxon>Burkholderiaceae</taxon>
        <taxon>Polynucleobacter</taxon>
    </lineage>
</organism>
<proteinExistence type="inferred from homology"/>
<keyword id="KW-0686">Riboflavin biosynthesis</keyword>
<keyword id="KW-0808">Transferase</keyword>
<comment type="function">
    <text evidence="1">Catalyzes the formation of 6,7-dimethyl-8-ribityllumazine by condensation of 5-amino-6-(D-ribitylamino)uracil with 3,4-dihydroxy-2-butanone 4-phosphate. This is the penultimate step in the biosynthesis of riboflavin.</text>
</comment>
<comment type="catalytic activity">
    <reaction evidence="1">
        <text>(2S)-2-hydroxy-3-oxobutyl phosphate + 5-amino-6-(D-ribitylamino)uracil = 6,7-dimethyl-8-(1-D-ribityl)lumazine + phosphate + 2 H2O + H(+)</text>
        <dbReference type="Rhea" id="RHEA:26152"/>
        <dbReference type="ChEBI" id="CHEBI:15377"/>
        <dbReference type="ChEBI" id="CHEBI:15378"/>
        <dbReference type="ChEBI" id="CHEBI:15934"/>
        <dbReference type="ChEBI" id="CHEBI:43474"/>
        <dbReference type="ChEBI" id="CHEBI:58201"/>
        <dbReference type="ChEBI" id="CHEBI:58830"/>
        <dbReference type="EC" id="2.5.1.78"/>
    </reaction>
</comment>
<comment type="pathway">
    <text evidence="1">Cofactor biosynthesis; riboflavin biosynthesis; riboflavin from 2-hydroxy-3-oxobutyl phosphate and 5-amino-6-(D-ribitylamino)uracil: step 1/2.</text>
</comment>
<comment type="similarity">
    <text evidence="1">Belongs to the DMRL synthase family.</text>
</comment>
<name>RISB_POLNS</name>
<accession>B1XTA7</accession>